<gene>
    <name evidence="1" type="primary">plsX</name>
    <name type="ordered locus">APH_0316</name>
</gene>
<proteinExistence type="inferred from homology"/>
<sequence>MTEIRDDSISIALDAMGGDSAPDVVIEGANLVLSGVVPCDGKVHFSIYGKKEEVLPVLAKYKLVEANSVFVDVSDAVSSSDRPSYALRHRRRSSMWHAVEDLKKGLVSAVVSAGNTGALMAISRHLLGTIHSIDRPAIAVAMPSQKSSFVVLDIGANIECSADALLQFAIMGVAFAKAILGRTDPKVGLLNVGSEEVKGTYAVQEAFSLMRAAKSKMDFYGYIEAEEVFKGEVDVVVADGFSGNIMLKTTEAVANLLMSLFKGVVKSSITAKIAACMLKPSVRKTMELVDPKLYNGAMLVGLNGVVVKSHGSADGKAYACAIKTAVHSARYAIVSKIASEISEMG</sequence>
<keyword id="KW-0963">Cytoplasm</keyword>
<keyword id="KW-0444">Lipid biosynthesis</keyword>
<keyword id="KW-0443">Lipid metabolism</keyword>
<keyword id="KW-0594">Phospholipid biosynthesis</keyword>
<keyword id="KW-1208">Phospholipid metabolism</keyword>
<keyword id="KW-0808">Transferase</keyword>
<reference key="1">
    <citation type="journal article" date="2006" name="PLoS Genet.">
        <title>Comparative genomics of emerging human ehrlichiosis agents.</title>
        <authorList>
            <person name="Dunning Hotopp J.C."/>
            <person name="Lin M."/>
            <person name="Madupu R."/>
            <person name="Crabtree J."/>
            <person name="Angiuoli S.V."/>
            <person name="Eisen J.A."/>
            <person name="Seshadri R."/>
            <person name="Ren Q."/>
            <person name="Wu M."/>
            <person name="Utterback T.R."/>
            <person name="Smith S."/>
            <person name="Lewis M."/>
            <person name="Khouri H."/>
            <person name="Zhang C."/>
            <person name="Niu H."/>
            <person name="Lin Q."/>
            <person name="Ohashi N."/>
            <person name="Zhi N."/>
            <person name="Nelson W.C."/>
            <person name="Brinkac L.M."/>
            <person name="Dodson R.J."/>
            <person name="Rosovitz M.J."/>
            <person name="Sundaram J.P."/>
            <person name="Daugherty S.C."/>
            <person name="Davidsen T."/>
            <person name="Durkin A.S."/>
            <person name="Gwinn M.L."/>
            <person name="Haft D.H."/>
            <person name="Selengut J.D."/>
            <person name="Sullivan S.A."/>
            <person name="Zafar N."/>
            <person name="Zhou L."/>
            <person name="Benahmed F."/>
            <person name="Forberger H."/>
            <person name="Halpin R."/>
            <person name="Mulligan S."/>
            <person name="Robinson J."/>
            <person name="White O."/>
            <person name="Rikihisa Y."/>
            <person name="Tettelin H."/>
        </authorList>
    </citation>
    <scope>NUCLEOTIDE SEQUENCE [LARGE SCALE GENOMIC DNA]</scope>
    <source>
        <strain>HZ</strain>
    </source>
</reference>
<evidence type="ECO:0000255" key="1">
    <source>
        <dbReference type="HAMAP-Rule" id="MF_00019"/>
    </source>
</evidence>
<name>PLSX_ANAPZ</name>
<feature type="chain" id="PRO_1000001715" description="Phosphate acyltransferase">
    <location>
        <begin position="1"/>
        <end position="345"/>
    </location>
</feature>
<dbReference type="EC" id="2.3.1.274" evidence="1"/>
<dbReference type="EMBL" id="CP000235">
    <property type="protein sequence ID" value="ABD43930.1"/>
    <property type="molecule type" value="Genomic_DNA"/>
</dbReference>
<dbReference type="RefSeq" id="WP_011450451.1">
    <property type="nucleotide sequence ID" value="NC_007797.1"/>
</dbReference>
<dbReference type="SMR" id="Q2GL23"/>
<dbReference type="STRING" id="212042.APH_0316"/>
<dbReference type="PaxDb" id="212042-APH_0316"/>
<dbReference type="EnsemblBacteria" id="ABD43930">
    <property type="protein sequence ID" value="ABD43930"/>
    <property type="gene ID" value="APH_0316"/>
</dbReference>
<dbReference type="GeneID" id="92747489"/>
<dbReference type="KEGG" id="aph:APH_0316"/>
<dbReference type="eggNOG" id="COG0416">
    <property type="taxonomic scope" value="Bacteria"/>
</dbReference>
<dbReference type="HOGENOM" id="CLU_039379_1_0_5"/>
<dbReference type="UniPathway" id="UPA00085"/>
<dbReference type="Proteomes" id="UP000001943">
    <property type="component" value="Chromosome"/>
</dbReference>
<dbReference type="GO" id="GO:0005737">
    <property type="term" value="C:cytoplasm"/>
    <property type="evidence" value="ECO:0007669"/>
    <property type="project" value="UniProtKB-SubCell"/>
</dbReference>
<dbReference type="GO" id="GO:0043811">
    <property type="term" value="F:phosphate:acyl-[acyl carrier protein] acyltransferase activity"/>
    <property type="evidence" value="ECO:0007669"/>
    <property type="project" value="UniProtKB-UniRule"/>
</dbReference>
<dbReference type="GO" id="GO:0006633">
    <property type="term" value="P:fatty acid biosynthetic process"/>
    <property type="evidence" value="ECO:0007669"/>
    <property type="project" value="UniProtKB-UniRule"/>
</dbReference>
<dbReference type="GO" id="GO:0008654">
    <property type="term" value="P:phospholipid biosynthetic process"/>
    <property type="evidence" value="ECO:0007669"/>
    <property type="project" value="UniProtKB-KW"/>
</dbReference>
<dbReference type="Gene3D" id="3.40.718.10">
    <property type="entry name" value="Isopropylmalate Dehydrogenase"/>
    <property type="match status" value="1"/>
</dbReference>
<dbReference type="HAMAP" id="MF_00019">
    <property type="entry name" value="PlsX"/>
    <property type="match status" value="1"/>
</dbReference>
<dbReference type="InterPro" id="IPR003664">
    <property type="entry name" value="FA_synthesis"/>
</dbReference>
<dbReference type="InterPro" id="IPR012281">
    <property type="entry name" value="Phospholipid_synth_PlsX-like"/>
</dbReference>
<dbReference type="NCBIfam" id="TIGR00182">
    <property type="entry name" value="plsX"/>
    <property type="match status" value="1"/>
</dbReference>
<dbReference type="PANTHER" id="PTHR30100">
    <property type="entry name" value="FATTY ACID/PHOSPHOLIPID SYNTHESIS PROTEIN PLSX"/>
    <property type="match status" value="1"/>
</dbReference>
<dbReference type="PANTHER" id="PTHR30100:SF1">
    <property type="entry name" value="PHOSPHATE ACYLTRANSFERASE"/>
    <property type="match status" value="1"/>
</dbReference>
<dbReference type="Pfam" id="PF02504">
    <property type="entry name" value="FA_synthesis"/>
    <property type="match status" value="1"/>
</dbReference>
<dbReference type="PIRSF" id="PIRSF002465">
    <property type="entry name" value="Phsphlp_syn_PlsX"/>
    <property type="match status" value="1"/>
</dbReference>
<dbReference type="SUPFAM" id="SSF53659">
    <property type="entry name" value="Isocitrate/Isopropylmalate dehydrogenase-like"/>
    <property type="match status" value="1"/>
</dbReference>
<organism>
    <name type="scientific">Anaplasma phagocytophilum (strain HZ)</name>
    <dbReference type="NCBI Taxonomy" id="212042"/>
    <lineage>
        <taxon>Bacteria</taxon>
        <taxon>Pseudomonadati</taxon>
        <taxon>Pseudomonadota</taxon>
        <taxon>Alphaproteobacteria</taxon>
        <taxon>Rickettsiales</taxon>
        <taxon>Anaplasmataceae</taxon>
        <taxon>Anaplasma</taxon>
        <taxon>phagocytophilum group</taxon>
    </lineage>
</organism>
<comment type="function">
    <text evidence="1">Catalyzes the reversible formation of acyl-phosphate (acyl-PO(4)) from acyl-[acyl-carrier-protein] (acyl-ACP). This enzyme utilizes acyl-ACP as fatty acyl donor, but not acyl-CoA.</text>
</comment>
<comment type="catalytic activity">
    <reaction evidence="1">
        <text>a fatty acyl-[ACP] + phosphate = an acyl phosphate + holo-[ACP]</text>
        <dbReference type="Rhea" id="RHEA:42292"/>
        <dbReference type="Rhea" id="RHEA-COMP:9685"/>
        <dbReference type="Rhea" id="RHEA-COMP:14125"/>
        <dbReference type="ChEBI" id="CHEBI:43474"/>
        <dbReference type="ChEBI" id="CHEBI:59918"/>
        <dbReference type="ChEBI" id="CHEBI:64479"/>
        <dbReference type="ChEBI" id="CHEBI:138651"/>
        <dbReference type="EC" id="2.3.1.274"/>
    </reaction>
</comment>
<comment type="pathway">
    <text evidence="1">Lipid metabolism; phospholipid metabolism.</text>
</comment>
<comment type="subunit">
    <text evidence="1">Homodimer. Probably interacts with PlsY.</text>
</comment>
<comment type="subcellular location">
    <subcellularLocation>
        <location evidence="1">Cytoplasm</location>
    </subcellularLocation>
    <text evidence="1">Associated with the membrane possibly through PlsY.</text>
</comment>
<comment type="similarity">
    <text evidence="1">Belongs to the PlsX family.</text>
</comment>
<accession>Q2GL23</accession>
<protein>
    <recommendedName>
        <fullName evidence="1">Phosphate acyltransferase</fullName>
        <ecNumber evidence="1">2.3.1.274</ecNumber>
    </recommendedName>
    <alternativeName>
        <fullName evidence="1">Acyl-ACP phosphotransacylase</fullName>
    </alternativeName>
    <alternativeName>
        <fullName evidence="1">Acyl-[acyl-carrier-protein]--phosphate acyltransferase</fullName>
    </alternativeName>
    <alternativeName>
        <fullName evidence="1">Phosphate-acyl-ACP acyltransferase</fullName>
    </alternativeName>
</protein>